<gene>
    <name evidence="1" type="primary">hemC</name>
    <name type="ordered locus">Smlt4129</name>
</gene>
<comment type="function">
    <text evidence="1">Tetrapolymerization of the monopyrrole PBG into the hydroxymethylbilane pre-uroporphyrinogen in several discrete steps.</text>
</comment>
<comment type="catalytic activity">
    <reaction evidence="1">
        <text>4 porphobilinogen + H2O = hydroxymethylbilane + 4 NH4(+)</text>
        <dbReference type="Rhea" id="RHEA:13185"/>
        <dbReference type="ChEBI" id="CHEBI:15377"/>
        <dbReference type="ChEBI" id="CHEBI:28938"/>
        <dbReference type="ChEBI" id="CHEBI:57845"/>
        <dbReference type="ChEBI" id="CHEBI:58126"/>
        <dbReference type="EC" id="2.5.1.61"/>
    </reaction>
</comment>
<comment type="cofactor">
    <cofactor evidence="1">
        <name>dipyrromethane</name>
        <dbReference type="ChEBI" id="CHEBI:60342"/>
    </cofactor>
    <text evidence="1">Binds 1 dipyrromethane group covalently.</text>
</comment>
<comment type="pathway">
    <text evidence="1">Porphyrin-containing compound metabolism; protoporphyrin-IX biosynthesis; coproporphyrinogen-III from 5-aminolevulinate: step 2/4.</text>
</comment>
<comment type="subunit">
    <text evidence="1">Monomer.</text>
</comment>
<comment type="miscellaneous">
    <text evidence="1">The porphobilinogen subunits are added to the dipyrromethane group.</text>
</comment>
<comment type="similarity">
    <text evidence="1">Belongs to the HMBS family.</text>
</comment>
<proteinExistence type="inferred from homology"/>
<feature type="chain" id="PRO_1000114180" description="Porphobilinogen deaminase">
    <location>
        <begin position="1"/>
        <end position="303"/>
    </location>
</feature>
<feature type="modified residue" description="S-(dipyrrolylmethanemethyl)cysteine" evidence="1">
    <location>
        <position position="240"/>
    </location>
</feature>
<name>HEM3_STRMK</name>
<keyword id="KW-0627">Porphyrin biosynthesis</keyword>
<keyword id="KW-1185">Reference proteome</keyword>
<keyword id="KW-0808">Transferase</keyword>
<accession>B2FI06</accession>
<reference key="1">
    <citation type="journal article" date="2008" name="Genome Biol.">
        <title>The complete genome, comparative and functional analysis of Stenotrophomonas maltophilia reveals an organism heavily shielded by drug resistance determinants.</title>
        <authorList>
            <person name="Crossman L.C."/>
            <person name="Gould V.C."/>
            <person name="Dow J.M."/>
            <person name="Vernikos G.S."/>
            <person name="Okazaki A."/>
            <person name="Sebaihia M."/>
            <person name="Saunders D."/>
            <person name="Arrowsmith C."/>
            <person name="Carver T."/>
            <person name="Peters N."/>
            <person name="Adlem E."/>
            <person name="Kerhornou A."/>
            <person name="Lord A."/>
            <person name="Murphy L."/>
            <person name="Seeger K."/>
            <person name="Squares R."/>
            <person name="Rutter S."/>
            <person name="Quail M.A."/>
            <person name="Rajandream M.A."/>
            <person name="Harris D."/>
            <person name="Churcher C."/>
            <person name="Bentley S.D."/>
            <person name="Parkhill J."/>
            <person name="Thomson N.R."/>
            <person name="Avison M.B."/>
        </authorList>
    </citation>
    <scope>NUCLEOTIDE SEQUENCE [LARGE SCALE GENOMIC DNA]</scope>
    <source>
        <strain>K279a</strain>
    </source>
</reference>
<evidence type="ECO:0000255" key="1">
    <source>
        <dbReference type="HAMAP-Rule" id="MF_00260"/>
    </source>
</evidence>
<dbReference type="EC" id="2.5.1.61" evidence="1"/>
<dbReference type="EMBL" id="AM743169">
    <property type="protein sequence ID" value="CAQ47520.1"/>
    <property type="molecule type" value="Genomic_DNA"/>
</dbReference>
<dbReference type="RefSeq" id="WP_012481329.1">
    <property type="nucleotide sequence ID" value="NC_010943.1"/>
</dbReference>
<dbReference type="SMR" id="B2FI06"/>
<dbReference type="EnsemblBacteria" id="CAQ47520">
    <property type="protein sequence ID" value="CAQ47520"/>
    <property type="gene ID" value="Smlt4129"/>
</dbReference>
<dbReference type="KEGG" id="sml:Smlt4129"/>
<dbReference type="PATRIC" id="fig|522373.3.peg.3901"/>
<dbReference type="eggNOG" id="COG0181">
    <property type="taxonomic scope" value="Bacteria"/>
</dbReference>
<dbReference type="HOGENOM" id="CLU_019704_0_2_6"/>
<dbReference type="UniPathway" id="UPA00251">
    <property type="reaction ID" value="UER00319"/>
</dbReference>
<dbReference type="Proteomes" id="UP000008840">
    <property type="component" value="Chromosome"/>
</dbReference>
<dbReference type="GO" id="GO:0005737">
    <property type="term" value="C:cytoplasm"/>
    <property type="evidence" value="ECO:0007669"/>
    <property type="project" value="TreeGrafter"/>
</dbReference>
<dbReference type="GO" id="GO:0004418">
    <property type="term" value="F:hydroxymethylbilane synthase activity"/>
    <property type="evidence" value="ECO:0007669"/>
    <property type="project" value="UniProtKB-UniRule"/>
</dbReference>
<dbReference type="GO" id="GO:0006782">
    <property type="term" value="P:protoporphyrinogen IX biosynthetic process"/>
    <property type="evidence" value="ECO:0007669"/>
    <property type="project" value="UniProtKB-UniRule"/>
</dbReference>
<dbReference type="CDD" id="cd13646">
    <property type="entry name" value="PBP2_EcHMBS_like"/>
    <property type="match status" value="1"/>
</dbReference>
<dbReference type="FunFam" id="3.40.190.10:FF:000004">
    <property type="entry name" value="Porphobilinogen deaminase"/>
    <property type="match status" value="1"/>
</dbReference>
<dbReference type="FunFam" id="3.40.190.10:FF:000005">
    <property type="entry name" value="Porphobilinogen deaminase"/>
    <property type="match status" value="1"/>
</dbReference>
<dbReference type="Gene3D" id="3.40.190.10">
    <property type="entry name" value="Periplasmic binding protein-like II"/>
    <property type="match status" value="2"/>
</dbReference>
<dbReference type="Gene3D" id="3.30.160.40">
    <property type="entry name" value="Porphobilinogen deaminase, C-terminal domain"/>
    <property type="match status" value="1"/>
</dbReference>
<dbReference type="HAMAP" id="MF_00260">
    <property type="entry name" value="Porphobil_deam"/>
    <property type="match status" value="1"/>
</dbReference>
<dbReference type="InterPro" id="IPR000860">
    <property type="entry name" value="HemC"/>
</dbReference>
<dbReference type="InterPro" id="IPR022419">
    <property type="entry name" value="Porphobilin_deaminase_cofac_BS"/>
</dbReference>
<dbReference type="InterPro" id="IPR022417">
    <property type="entry name" value="Porphobilin_deaminase_N"/>
</dbReference>
<dbReference type="InterPro" id="IPR022418">
    <property type="entry name" value="Porphobilinogen_deaminase_C"/>
</dbReference>
<dbReference type="InterPro" id="IPR036803">
    <property type="entry name" value="Porphobilinogen_deaminase_C_sf"/>
</dbReference>
<dbReference type="NCBIfam" id="TIGR00212">
    <property type="entry name" value="hemC"/>
    <property type="match status" value="1"/>
</dbReference>
<dbReference type="PANTHER" id="PTHR11557">
    <property type="entry name" value="PORPHOBILINOGEN DEAMINASE"/>
    <property type="match status" value="1"/>
</dbReference>
<dbReference type="PANTHER" id="PTHR11557:SF0">
    <property type="entry name" value="PORPHOBILINOGEN DEAMINASE"/>
    <property type="match status" value="1"/>
</dbReference>
<dbReference type="Pfam" id="PF01379">
    <property type="entry name" value="Porphobil_deam"/>
    <property type="match status" value="1"/>
</dbReference>
<dbReference type="Pfam" id="PF03900">
    <property type="entry name" value="Porphobil_deamC"/>
    <property type="match status" value="1"/>
</dbReference>
<dbReference type="PIRSF" id="PIRSF001438">
    <property type="entry name" value="4pyrrol_synth_OHMeBilane_synth"/>
    <property type="match status" value="1"/>
</dbReference>
<dbReference type="PRINTS" id="PR00151">
    <property type="entry name" value="PORPHBDMNASE"/>
</dbReference>
<dbReference type="SUPFAM" id="SSF53850">
    <property type="entry name" value="Periplasmic binding protein-like II"/>
    <property type="match status" value="1"/>
</dbReference>
<dbReference type="SUPFAM" id="SSF54782">
    <property type="entry name" value="Porphobilinogen deaminase (hydroxymethylbilane synthase), C-terminal domain"/>
    <property type="match status" value="1"/>
</dbReference>
<dbReference type="PROSITE" id="PS00533">
    <property type="entry name" value="PORPHOBILINOGEN_DEAM"/>
    <property type="match status" value="1"/>
</dbReference>
<sequence length="303" mass="32217">METVRIATRKSPLALWQSEHVADRLRQAHPGLHVELVPMSTRGDEVLDRSLAAIGGKGLFLKELELAMLRGEADCAVHSLKDVPMELDPPFALPAMLTRHDPADGFVSNLYASLDALPIGARVGTSSLRRQAQLRALRPDLELLDLRGNVNTRLAKLDNGGYDAIVLAVAGLERLGLGERIVARLQPPQWLPAPAQGAVAVECDGGNARLMALFAPLDDAATRACVEAERAMNRALHGSCHVPVAAIAQWQGDDLHLQGLVGSASDGRAVRAEAVGPANDPEGLGQRVAKLLLDDGAGELLNV</sequence>
<protein>
    <recommendedName>
        <fullName evidence="1">Porphobilinogen deaminase</fullName>
        <shortName evidence="1">PBG</shortName>
        <ecNumber evidence="1">2.5.1.61</ecNumber>
    </recommendedName>
    <alternativeName>
        <fullName evidence="1">Hydroxymethylbilane synthase</fullName>
        <shortName evidence="1">HMBS</shortName>
    </alternativeName>
    <alternativeName>
        <fullName evidence="1">Pre-uroporphyrinogen synthase</fullName>
    </alternativeName>
</protein>
<organism>
    <name type="scientific">Stenotrophomonas maltophilia (strain K279a)</name>
    <dbReference type="NCBI Taxonomy" id="522373"/>
    <lineage>
        <taxon>Bacteria</taxon>
        <taxon>Pseudomonadati</taxon>
        <taxon>Pseudomonadota</taxon>
        <taxon>Gammaproteobacteria</taxon>
        <taxon>Lysobacterales</taxon>
        <taxon>Lysobacteraceae</taxon>
        <taxon>Stenotrophomonas</taxon>
        <taxon>Stenotrophomonas maltophilia group</taxon>
    </lineage>
</organism>